<comment type="function">
    <text evidence="1">Functions as a diacylglycerol (DAG)-regulated nucleotide exchange factor specifically activating Ras through the exchange of bound GDP for GTP.</text>
</comment>
<comment type="activity regulation">
    <text evidence="1">Regulated by F-actin polymerization and probably by calcium.</text>
</comment>
<comment type="subcellular location">
    <subcellularLocation>
        <location evidence="1">Cytoplasm</location>
        <location evidence="1">Cytosol</location>
    </subcellularLocation>
    <subcellularLocation>
        <location evidence="1">Cell membrane</location>
        <topology evidence="1">Peripheral membrane protein</topology>
    </subcellularLocation>
    <subcellularLocation>
        <location evidence="1">Golgi apparatus membrane</location>
        <topology evidence="1">Peripheral membrane protein</topology>
    </subcellularLocation>
    <subcellularLocation>
        <location evidence="1">Endoplasmic reticulum membrane</location>
        <topology evidence="1">Peripheral membrane protein</topology>
    </subcellularLocation>
    <text evidence="1">Found both in the cytosol and associated with membranes.</text>
</comment>
<comment type="domain">
    <text evidence="1">The phorbol-ester/DAG-type zinc finger is the principal mediator of the targeting to membranes and is required for functional activation through DAG-binding.</text>
</comment>
<comment type="similarity">
    <text evidence="8">Belongs to the RASGRP family.</text>
</comment>
<sequence>MGTVGKKKDRPAHGCSTIPKLALELKQIIHSTTHPKVPAVTPLRVMMPLGKLSKGASLDELIQMCIQAFDLDGNMGQNNELLQIMLTMHGFLIPSTELLIKLRTLYQDAMQNRSFSFCLRICYFIRYWITELWVMFKMDAKLTQTMEEFQELVRSHGEELHWRLIDTAQINSRDWSRKLTQRIQSNCSKKRKVSLLFDHLEPQELAEHLTYLEFKAFRRISFSDYQNYIVNGCVKDNPTMERSIALCNGISQWVQLMVLSRPTPQLRAEVLTKFIHVAQKLHQLQNFNTLMAVIGGLCHSSISRLKDTSSHVSHDVTKVLNEMTELLSSCRNYDNYRRAYNECTNFKIPILGVHLKDLIALHEAMPDFLEESKINVPKLHSLYNHINELIQLQNIAPPLEANMDLVHLLTLSLDLYYTEDEMYELSYAREPRNYRAPPVTPSKPPVVADWASGVSPKPDPKTISKHVQRMVDSVFKNYDLDQDGYISQEEFEKIAASFPFSFCVMDKDREGLISRQEITAYFMRASSICSKLGLGFLHNFQETTYLRPTFCDNCAGFLWGVIKQGYRCKDCGMNCHKQCKELVVFECKKRSKCSMGENNTLSDAGQLEVIPAGGKGLTNDCLGADEGPYSYPNGDGDIHTEVSKDRTIMLMGSSAQKISVRLQPAVKHRATQTENETQSLCLQVPSPPRSRTPDLTSHLPISPMPSPCPSPVPTRKKAYAKWENKDSIRKARAELRGGKAGIQELEKEKVFLKEENTALKIQLKDAHRRVETLRAELRKYVLDSDTHQKGS</sequence>
<accession>Q6NTL4</accession>
<keyword id="KW-0106">Calcium</keyword>
<keyword id="KW-1003">Cell membrane</keyword>
<keyword id="KW-0175">Coiled coil</keyword>
<keyword id="KW-0963">Cytoplasm</keyword>
<keyword id="KW-0221">Differentiation</keyword>
<keyword id="KW-0256">Endoplasmic reticulum</keyword>
<keyword id="KW-0333">Golgi apparatus</keyword>
<keyword id="KW-0344">Guanine-nucleotide releasing factor</keyword>
<keyword id="KW-0472">Membrane</keyword>
<keyword id="KW-0479">Metal-binding</keyword>
<keyword id="KW-1185">Reference proteome</keyword>
<keyword id="KW-0677">Repeat</keyword>
<keyword id="KW-0862">Zinc</keyword>
<keyword id="KW-0863">Zinc-finger</keyword>
<protein>
    <recommendedName>
        <fullName>RAS guanyl-releasing protein 1</fullName>
    </recommendedName>
</protein>
<proteinExistence type="evidence at transcript level"/>
<dbReference type="EMBL" id="BC068947">
    <property type="protein sequence ID" value="AAH68947.1"/>
    <property type="molecule type" value="mRNA"/>
</dbReference>
<dbReference type="RefSeq" id="NP_001084532.2">
    <property type="nucleotide sequence ID" value="NM_001091063.1"/>
</dbReference>
<dbReference type="SMR" id="Q6NTL4"/>
<dbReference type="DNASU" id="414479"/>
<dbReference type="AGR" id="Xenbase:XB-GENE-489815"/>
<dbReference type="Xenbase" id="XB-GENE-489815">
    <property type="gene designation" value="rasgrp1.L"/>
</dbReference>
<dbReference type="Proteomes" id="UP000186698">
    <property type="component" value="Unplaced"/>
</dbReference>
<dbReference type="Bgee" id="414479">
    <property type="expression patterns" value="Expressed in spleen and 18 other cell types or tissues"/>
</dbReference>
<dbReference type="GO" id="GO:0005829">
    <property type="term" value="C:cytosol"/>
    <property type="evidence" value="ECO:0007669"/>
    <property type="project" value="UniProtKB-SubCell"/>
</dbReference>
<dbReference type="GO" id="GO:0005789">
    <property type="term" value="C:endoplasmic reticulum membrane"/>
    <property type="evidence" value="ECO:0007669"/>
    <property type="project" value="UniProtKB-SubCell"/>
</dbReference>
<dbReference type="GO" id="GO:0000139">
    <property type="term" value="C:Golgi membrane"/>
    <property type="evidence" value="ECO:0007669"/>
    <property type="project" value="UniProtKB-SubCell"/>
</dbReference>
<dbReference type="GO" id="GO:0005886">
    <property type="term" value="C:plasma membrane"/>
    <property type="evidence" value="ECO:0000318"/>
    <property type="project" value="GO_Central"/>
</dbReference>
<dbReference type="GO" id="GO:0005509">
    <property type="term" value="F:calcium ion binding"/>
    <property type="evidence" value="ECO:0007669"/>
    <property type="project" value="InterPro"/>
</dbReference>
<dbReference type="GO" id="GO:0005085">
    <property type="term" value="F:guanyl-nucleotide exchange factor activity"/>
    <property type="evidence" value="ECO:0000318"/>
    <property type="project" value="GO_Central"/>
</dbReference>
<dbReference type="GO" id="GO:0008270">
    <property type="term" value="F:zinc ion binding"/>
    <property type="evidence" value="ECO:0007669"/>
    <property type="project" value="UniProtKB-KW"/>
</dbReference>
<dbReference type="GO" id="GO:0030154">
    <property type="term" value="P:cell differentiation"/>
    <property type="evidence" value="ECO:0007669"/>
    <property type="project" value="UniProtKB-KW"/>
</dbReference>
<dbReference type="GO" id="GO:0007265">
    <property type="term" value="P:Ras protein signal transduction"/>
    <property type="evidence" value="ECO:0000318"/>
    <property type="project" value="GO_Central"/>
</dbReference>
<dbReference type="CDD" id="cd20860">
    <property type="entry name" value="C1_RASGRP1"/>
    <property type="match status" value="1"/>
</dbReference>
<dbReference type="CDD" id="cd22290">
    <property type="entry name" value="cc_RasGRP1_C"/>
    <property type="match status" value="1"/>
</dbReference>
<dbReference type="CDD" id="cd00051">
    <property type="entry name" value="EFh"/>
    <property type="match status" value="1"/>
</dbReference>
<dbReference type="CDD" id="cd00155">
    <property type="entry name" value="RasGEF"/>
    <property type="match status" value="1"/>
</dbReference>
<dbReference type="CDD" id="cd06224">
    <property type="entry name" value="REM"/>
    <property type="match status" value="1"/>
</dbReference>
<dbReference type="FunFam" id="3.30.60.20:FF:000023">
    <property type="entry name" value="RAS guanyl-releasing protein 1 isoform X1"/>
    <property type="match status" value="1"/>
</dbReference>
<dbReference type="FunFam" id="1.10.238.10:FF:000051">
    <property type="entry name" value="Ras guanyl-releasing protein 3 isoform 1"/>
    <property type="match status" value="1"/>
</dbReference>
<dbReference type="FunFam" id="1.10.840.10:FF:000003">
    <property type="entry name" value="Ras guanyl-releasing protein 3 isoform 1"/>
    <property type="match status" value="1"/>
</dbReference>
<dbReference type="Gene3D" id="3.30.60.20">
    <property type="match status" value="1"/>
</dbReference>
<dbReference type="Gene3D" id="6.10.250.2730">
    <property type="match status" value="1"/>
</dbReference>
<dbReference type="Gene3D" id="1.10.238.10">
    <property type="entry name" value="EF-hand"/>
    <property type="match status" value="1"/>
</dbReference>
<dbReference type="Gene3D" id="1.10.840.10">
    <property type="entry name" value="Ras guanine-nucleotide exchange factors catalytic domain"/>
    <property type="match status" value="1"/>
</dbReference>
<dbReference type="Gene3D" id="1.20.870.10">
    <property type="entry name" value="Son of sevenless (SoS) protein Chain: S domain 1"/>
    <property type="match status" value="1"/>
</dbReference>
<dbReference type="InterPro" id="IPR046349">
    <property type="entry name" value="C1-like_sf"/>
</dbReference>
<dbReference type="InterPro" id="IPR020454">
    <property type="entry name" value="DAG/PE-bd"/>
</dbReference>
<dbReference type="InterPro" id="IPR011992">
    <property type="entry name" value="EF-hand-dom_pair"/>
</dbReference>
<dbReference type="InterPro" id="IPR018247">
    <property type="entry name" value="EF_Hand_1_Ca_BS"/>
</dbReference>
<dbReference type="InterPro" id="IPR002048">
    <property type="entry name" value="EF_hand_dom"/>
</dbReference>
<dbReference type="InterPro" id="IPR002219">
    <property type="entry name" value="PE/DAG-bd"/>
</dbReference>
<dbReference type="InterPro" id="IPR008937">
    <property type="entry name" value="Ras-like_GEF"/>
</dbReference>
<dbReference type="InterPro" id="IPR000651">
    <property type="entry name" value="Ras-like_Gua-exchang_fac_N"/>
</dbReference>
<dbReference type="InterPro" id="IPR023578">
    <property type="entry name" value="Ras_GEF_dom_sf"/>
</dbReference>
<dbReference type="InterPro" id="IPR001895">
    <property type="entry name" value="RASGEF_cat_dom"/>
</dbReference>
<dbReference type="InterPro" id="IPR036964">
    <property type="entry name" value="RASGEF_cat_dom_sf"/>
</dbReference>
<dbReference type="PANTHER" id="PTHR23113">
    <property type="entry name" value="GUANINE NUCLEOTIDE EXCHANGE FACTOR"/>
    <property type="match status" value="1"/>
</dbReference>
<dbReference type="PANTHER" id="PTHR23113:SF174">
    <property type="entry name" value="RAS GUANYL-RELEASING PROTEIN 1"/>
    <property type="match status" value="1"/>
</dbReference>
<dbReference type="Pfam" id="PF00130">
    <property type="entry name" value="C1_1"/>
    <property type="match status" value="1"/>
</dbReference>
<dbReference type="Pfam" id="PF00617">
    <property type="entry name" value="RasGEF"/>
    <property type="match status" value="1"/>
</dbReference>
<dbReference type="PRINTS" id="PR00008">
    <property type="entry name" value="DAGPEDOMAIN"/>
</dbReference>
<dbReference type="SMART" id="SM00109">
    <property type="entry name" value="C1"/>
    <property type="match status" value="1"/>
</dbReference>
<dbReference type="SMART" id="SM00054">
    <property type="entry name" value="EFh"/>
    <property type="match status" value="1"/>
</dbReference>
<dbReference type="SMART" id="SM00147">
    <property type="entry name" value="RasGEF"/>
    <property type="match status" value="1"/>
</dbReference>
<dbReference type="SMART" id="SM00229">
    <property type="entry name" value="RasGEFN"/>
    <property type="match status" value="1"/>
</dbReference>
<dbReference type="SUPFAM" id="SSF57889">
    <property type="entry name" value="Cysteine-rich domain"/>
    <property type="match status" value="1"/>
</dbReference>
<dbReference type="SUPFAM" id="SSF47473">
    <property type="entry name" value="EF-hand"/>
    <property type="match status" value="1"/>
</dbReference>
<dbReference type="SUPFAM" id="SSF48366">
    <property type="entry name" value="Ras GEF"/>
    <property type="match status" value="1"/>
</dbReference>
<dbReference type="PROSITE" id="PS00018">
    <property type="entry name" value="EF_HAND_1"/>
    <property type="match status" value="2"/>
</dbReference>
<dbReference type="PROSITE" id="PS50222">
    <property type="entry name" value="EF_HAND_2"/>
    <property type="match status" value="3"/>
</dbReference>
<dbReference type="PROSITE" id="PS50009">
    <property type="entry name" value="RASGEF_CAT"/>
    <property type="match status" value="1"/>
</dbReference>
<dbReference type="PROSITE" id="PS50212">
    <property type="entry name" value="RASGEF_NTER"/>
    <property type="match status" value="1"/>
</dbReference>
<dbReference type="PROSITE" id="PS00479">
    <property type="entry name" value="ZF_DAG_PE_1"/>
    <property type="match status" value="1"/>
</dbReference>
<dbReference type="PROSITE" id="PS50081">
    <property type="entry name" value="ZF_DAG_PE_2"/>
    <property type="match status" value="1"/>
</dbReference>
<feature type="chain" id="PRO_0000316981" description="RAS guanyl-releasing protein 1">
    <location>
        <begin position="1"/>
        <end position="791"/>
    </location>
</feature>
<feature type="domain" description="N-terminal Ras-GEF" evidence="3">
    <location>
        <begin position="49"/>
        <end position="172"/>
    </location>
</feature>
<feature type="domain" description="Ras-GEF" evidence="4">
    <location>
        <begin position="201"/>
        <end position="432"/>
    </location>
</feature>
<feature type="domain" description="EF-hand 1" evidence="6">
    <location>
        <begin position="466"/>
        <end position="501"/>
    </location>
</feature>
<feature type="domain" description="EF-hand 2" evidence="6">
    <location>
        <begin position="502"/>
        <end position="528"/>
    </location>
</feature>
<feature type="zinc finger region" description="Phorbol-ester/DAG-type" evidence="5">
    <location>
        <begin position="537"/>
        <end position="587"/>
    </location>
</feature>
<feature type="region of interest" description="Ras exchanger motif region; required for transforming activity" evidence="1">
    <location>
        <begin position="53"/>
        <end position="106"/>
    </location>
</feature>
<feature type="region of interest" description="Disordered" evidence="7">
    <location>
        <begin position="671"/>
        <end position="715"/>
    </location>
</feature>
<feature type="coiled-coil region" evidence="2">
    <location>
        <begin position="728"/>
        <end position="783"/>
    </location>
</feature>
<feature type="compositionally biased region" description="Polar residues" evidence="7">
    <location>
        <begin position="672"/>
        <end position="681"/>
    </location>
</feature>
<feature type="compositionally biased region" description="Pro residues" evidence="7">
    <location>
        <begin position="702"/>
        <end position="712"/>
    </location>
</feature>
<feature type="binding site" evidence="6">
    <location>
        <position position="479"/>
    </location>
    <ligand>
        <name>Ca(2+)</name>
        <dbReference type="ChEBI" id="CHEBI:29108"/>
        <label>1</label>
    </ligand>
</feature>
<feature type="binding site" evidence="6">
    <location>
        <position position="481"/>
    </location>
    <ligand>
        <name>Ca(2+)</name>
        <dbReference type="ChEBI" id="CHEBI:29108"/>
        <label>1</label>
    </ligand>
</feature>
<feature type="binding site" evidence="6">
    <location>
        <position position="483"/>
    </location>
    <ligand>
        <name>Ca(2+)</name>
        <dbReference type="ChEBI" id="CHEBI:29108"/>
        <label>1</label>
    </ligand>
</feature>
<feature type="binding site" evidence="6">
    <location>
        <position position="485"/>
    </location>
    <ligand>
        <name>Ca(2+)</name>
        <dbReference type="ChEBI" id="CHEBI:29108"/>
        <label>1</label>
    </ligand>
</feature>
<feature type="binding site" evidence="6">
    <location>
        <position position="490"/>
    </location>
    <ligand>
        <name>Ca(2+)</name>
        <dbReference type="ChEBI" id="CHEBI:29108"/>
        <label>1</label>
    </ligand>
</feature>
<feature type="binding site" evidence="6">
    <location>
        <position position="506"/>
    </location>
    <ligand>
        <name>Ca(2+)</name>
        <dbReference type="ChEBI" id="CHEBI:29108"/>
        <label>2</label>
    </ligand>
</feature>
<feature type="binding site" evidence="6">
    <location>
        <position position="508"/>
    </location>
    <ligand>
        <name>Ca(2+)</name>
        <dbReference type="ChEBI" id="CHEBI:29108"/>
        <label>2</label>
    </ligand>
</feature>
<feature type="binding site" evidence="6">
    <location>
        <position position="510"/>
    </location>
    <ligand>
        <name>Ca(2+)</name>
        <dbReference type="ChEBI" id="CHEBI:29108"/>
        <label>2</label>
    </ligand>
</feature>
<feature type="binding site" evidence="6">
    <location>
        <position position="517"/>
    </location>
    <ligand>
        <name>Ca(2+)</name>
        <dbReference type="ChEBI" id="CHEBI:29108"/>
        <label>2</label>
    </ligand>
</feature>
<reference key="1">
    <citation type="submission" date="2004-04" db="EMBL/GenBank/DDBJ databases">
        <authorList>
            <consortium name="NIH - Xenopus Gene Collection (XGC) project"/>
        </authorList>
    </citation>
    <scope>NUCLEOTIDE SEQUENCE [LARGE SCALE MRNA]</scope>
    <source>
        <tissue>Embryo</tissue>
    </source>
</reference>
<organism>
    <name type="scientific">Xenopus laevis</name>
    <name type="common">African clawed frog</name>
    <dbReference type="NCBI Taxonomy" id="8355"/>
    <lineage>
        <taxon>Eukaryota</taxon>
        <taxon>Metazoa</taxon>
        <taxon>Chordata</taxon>
        <taxon>Craniata</taxon>
        <taxon>Vertebrata</taxon>
        <taxon>Euteleostomi</taxon>
        <taxon>Amphibia</taxon>
        <taxon>Batrachia</taxon>
        <taxon>Anura</taxon>
        <taxon>Pipoidea</taxon>
        <taxon>Pipidae</taxon>
        <taxon>Xenopodinae</taxon>
        <taxon>Xenopus</taxon>
        <taxon>Xenopus</taxon>
    </lineage>
</organism>
<name>GRP1_XENLA</name>
<gene>
    <name type="primary">rasgrp1</name>
</gene>
<evidence type="ECO:0000250" key="1"/>
<evidence type="ECO:0000255" key="2"/>
<evidence type="ECO:0000255" key="3">
    <source>
        <dbReference type="PROSITE-ProRule" id="PRU00135"/>
    </source>
</evidence>
<evidence type="ECO:0000255" key="4">
    <source>
        <dbReference type="PROSITE-ProRule" id="PRU00168"/>
    </source>
</evidence>
<evidence type="ECO:0000255" key="5">
    <source>
        <dbReference type="PROSITE-ProRule" id="PRU00226"/>
    </source>
</evidence>
<evidence type="ECO:0000255" key="6">
    <source>
        <dbReference type="PROSITE-ProRule" id="PRU00448"/>
    </source>
</evidence>
<evidence type="ECO:0000256" key="7">
    <source>
        <dbReference type="SAM" id="MobiDB-lite"/>
    </source>
</evidence>
<evidence type="ECO:0000305" key="8"/>